<sequence>MSFNHIKKVIVGMSGGVDSSVSAWLLQQQGYKVEGLFMKNWEDDDSTEQCASASDLSDTHSVCDNLGIYLHTINFSKEYWENVFQVFLQEYSVGRTPNPDILCNKEIKFKYFLEFALQDLDADLIATGHYVRRVDMNKKTYLIRGVDRNKDQSYFLYTLSYKQLKQCLFPVGTLNKFQVRNIAKKLNLITANKKDSTGICFIGKRKFKDFISKYIPIRPGVIIDINGNTIGAHQGVSFYTLGQRKGLKIGGVKQGNGQPWYVIDKDTSNNTLIAAQGRNHPRLMSIAFITEQTQWVKRDALTSPLHCTVKTRYRHPDIQCQIYPLLNNNLKVILKIPVLAITPGQSAVFYLKERCLGGGIITKIYHC</sequence>
<protein>
    <recommendedName>
        <fullName evidence="1">tRNA-specific 2-thiouridylase MnmA</fullName>
        <ecNumber evidence="1">2.8.1.13</ecNumber>
    </recommendedName>
</protein>
<comment type="function">
    <text evidence="1">Catalyzes the 2-thiolation of uridine at the wobble position (U34) of tRNA(Lys), tRNA(Glu) and tRNA(Gln), leading to the formation of s(2)U34, the first step of tRNA-mnm(5)s(2)U34 synthesis. Sulfur is provided by IscS, via a sulfur-relay system. Binds ATP and its substrate tRNAs.</text>
</comment>
<comment type="catalytic activity">
    <reaction evidence="1">
        <text>S-sulfanyl-L-cysteinyl-[protein] + uridine(34) in tRNA + AH2 + ATP = 2-thiouridine(34) in tRNA + L-cysteinyl-[protein] + A + AMP + diphosphate + H(+)</text>
        <dbReference type="Rhea" id="RHEA:47032"/>
        <dbReference type="Rhea" id="RHEA-COMP:10131"/>
        <dbReference type="Rhea" id="RHEA-COMP:11726"/>
        <dbReference type="Rhea" id="RHEA-COMP:11727"/>
        <dbReference type="Rhea" id="RHEA-COMP:11728"/>
        <dbReference type="ChEBI" id="CHEBI:13193"/>
        <dbReference type="ChEBI" id="CHEBI:15378"/>
        <dbReference type="ChEBI" id="CHEBI:17499"/>
        <dbReference type="ChEBI" id="CHEBI:29950"/>
        <dbReference type="ChEBI" id="CHEBI:30616"/>
        <dbReference type="ChEBI" id="CHEBI:33019"/>
        <dbReference type="ChEBI" id="CHEBI:61963"/>
        <dbReference type="ChEBI" id="CHEBI:65315"/>
        <dbReference type="ChEBI" id="CHEBI:87170"/>
        <dbReference type="ChEBI" id="CHEBI:456215"/>
        <dbReference type="EC" id="2.8.1.13"/>
    </reaction>
</comment>
<comment type="subunit">
    <text evidence="1">Interacts with TusE.</text>
</comment>
<comment type="subcellular location">
    <subcellularLocation>
        <location evidence="1">Cytoplasm</location>
    </subcellularLocation>
</comment>
<comment type="similarity">
    <text evidence="1">Belongs to the MnmA/TRMU family.</text>
</comment>
<name>MNMA_BLOPB</name>
<gene>
    <name evidence="1" type="primary">mnmA</name>
    <name type="synonym">trmU</name>
    <name type="ordered locus">BPEN_404</name>
</gene>
<feature type="chain" id="PRO_1000057945" description="tRNA-specific 2-thiouridylase MnmA">
    <location>
        <begin position="1"/>
        <end position="367"/>
    </location>
</feature>
<feature type="region of interest" description="Interaction with target base in tRNA" evidence="1">
    <location>
        <begin position="98"/>
        <end position="100"/>
    </location>
</feature>
<feature type="region of interest" description="Interaction with tRNA" evidence="1">
    <location>
        <begin position="150"/>
        <end position="152"/>
    </location>
</feature>
<feature type="region of interest" description="Interaction with tRNA" evidence="1">
    <location>
        <begin position="312"/>
        <end position="313"/>
    </location>
</feature>
<feature type="active site" description="Nucleophile" evidence="1">
    <location>
        <position position="103"/>
    </location>
</feature>
<feature type="active site" description="Cysteine persulfide intermediate" evidence="1">
    <location>
        <position position="200"/>
    </location>
</feature>
<feature type="binding site" evidence="1">
    <location>
        <begin position="12"/>
        <end position="19"/>
    </location>
    <ligand>
        <name>ATP</name>
        <dbReference type="ChEBI" id="CHEBI:30616"/>
    </ligand>
</feature>
<feature type="binding site" evidence="1">
    <location>
        <position position="38"/>
    </location>
    <ligand>
        <name>ATP</name>
        <dbReference type="ChEBI" id="CHEBI:30616"/>
    </ligand>
</feature>
<feature type="binding site" evidence="1">
    <location>
        <position position="128"/>
    </location>
    <ligand>
        <name>ATP</name>
        <dbReference type="ChEBI" id="CHEBI:30616"/>
    </ligand>
</feature>
<feature type="site" description="Interaction with tRNA" evidence="1">
    <location>
        <position position="129"/>
    </location>
</feature>
<feature type="site" description="Interaction with tRNA" evidence="1">
    <location>
        <position position="345"/>
    </location>
</feature>
<feature type="disulfide bond" description="Alternate" evidence="1">
    <location>
        <begin position="103"/>
        <end position="200"/>
    </location>
</feature>
<dbReference type="EC" id="2.8.1.13" evidence="1"/>
<dbReference type="EMBL" id="CP000016">
    <property type="protein sequence ID" value="AAZ41028.1"/>
    <property type="molecule type" value="Genomic_DNA"/>
</dbReference>
<dbReference type="RefSeq" id="WP_011282937.1">
    <property type="nucleotide sequence ID" value="NC_007292.1"/>
</dbReference>
<dbReference type="SMR" id="Q492R5"/>
<dbReference type="STRING" id="291272.BPEN_404"/>
<dbReference type="KEGG" id="bpn:BPEN_404"/>
<dbReference type="eggNOG" id="COG0482">
    <property type="taxonomic scope" value="Bacteria"/>
</dbReference>
<dbReference type="HOGENOM" id="CLU_035188_1_0_6"/>
<dbReference type="OrthoDB" id="9800696at2"/>
<dbReference type="Proteomes" id="UP000007794">
    <property type="component" value="Chromosome"/>
</dbReference>
<dbReference type="GO" id="GO:0005737">
    <property type="term" value="C:cytoplasm"/>
    <property type="evidence" value="ECO:0007669"/>
    <property type="project" value="UniProtKB-SubCell"/>
</dbReference>
<dbReference type="GO" id="GO:0005524">
    <property type="term" value="F:ATP binding"/>
    <property type="evidence" value="ECO:0007669"/>
    <property type="project" value="UniProtKB-KW"/>
</dbReference>
<dbReference type="GO" id="GO:0000049">
    <property type="term" value="F:tRNA binding"/>
    <property type="evidence" value="ECO:0007669"/>
    <property type="project" value="UniProtKB-KW"/>
</dbReference>
<dbReference type="GO" id="GO:0103016">
    <property type="term" value="F:tRNA-uridine 2-sulfurtransferase activity"/>
    <property type="evidence" value="ECO:0007669"/>
    <property type="project" value="UniProtKB-EC"/>
</dbReference>
<dbReference type="GO" id="GO:0002143">
    <property type="term" value="P:tRNA wobble position uridine thiolation"/>
    <property type="evidence" value="ECO:0007669"/>
    <property type="project" value="TreeGrafter"/>
</dbReference>
<dbReference type="CDD" id="cd01998">
    <property type="entry name" value="MnmA_TRMU-like"/>
    <property type="match status" value="1"/>
</dbReference>
<dbReference type="FunFam" id="2.30.30.280:FF:000001">
    <property type="entry name" value="tRNA-specific 2-thiouridylase MnmA"/>
    <property type="match status" value="1"/>
</dbReference>
<dbReference type="FunFam" id="2.40.30.10:FF:000023">
    <property type="entry name" value="tRNA-specific 2-thiouridylase MnmA"/>
    <property type="match status" value="1"/>
</dbReference>
<dbReference type="FunFam" id="3.40.50.620:FF:000004">
    <property type="entry name" value="tRNA-specific 2-thiouridylase MnmA"/>
    <property type="match status" value="1"/>
</dbReference>
<dbReference type="Gene3D" id="2.30.30.280">
    <property type="entry name" value="Adenine nucleotide alpha hydrolases-like domains"/>
    <property type="match status" value="1"/>
</dbReference>
<dbReference type="Gene3D" id="3.40.50.620">
    <property type="entry name" value="HUPs"/>
    <property type="match status" value="1"/>
</dbReference>
<dbReference type="Gene3D" id="2.40.30.10">
    <property type="entry name" value="Translation factors"/>
    <property type="match status" value="1"/>
</dbReference>
<dbReference type="HAMAP" id="MF_00144">
    <property type="entry name" value="tRNA_thiouridyl_MnmA"/>
    <property type="match status" value="1"/>
</dbReference>
<dbReference type="InterPro" id="IPR004506">
    <property type="entry name" value="MnmA-like"/>
</dbReference>
<dbReference type="InterPro" id="IPR046885">
    <property type="entry name" value="MnmA-like_C"/>
</dbReference>
<dbReference type="InterPro" id="IPR046884">
    <property type="entry name" value="MnmA-like_central"/>
</dbReference>
<dbReference type="InterPro" id="IPR023382">
    <property type="entry name" value="MnmA-like_central_sf"/>
</dbReference>
<dbReference type="InterPro" id="IPR014729">
    <property type="entry name" value="Rossmann-like_a/b/a_fold"/>
</dbReference>
<dbReference type="NCBIfam" id="NF001138">
    <property type="entry name" value="PRK00143.1"/>
    <property type="match status" value="1"/>
</dbReference>
<dbReference type="NCBIfam" id="TIGR00420">
    <property type="entry name" value="trmU"/>
    <property type="match status" value="1"/>
</dbReference>
<dbReference type="PANTHER" id="PTHR11933:SF5">
    <property type="entry name" value="MITOCHONDRIAL TRNA-SPECIFIC 2-THIOURIDYLASE 1"/>
    <property type="match status" value="1"/>
</dbReference>
<dbReference type="PANTHER" id="PTHR11933">
    <property type="entry name" value="TRNA 5-METHYLAMINOMETHYL-2-THIOURIDYLATE -METHYLTRANSFERASE"/>
    <property type="match status" value="1"/>
</dbReference>
<dbReference type="Pfam" id="PF03054">
    <property type="entry name" value="tRNA_Me_trans"/>
    <property type="match status" value="1"/>
</dbReference>
<dbReference type="Pfam" id="PF20258">
    <property type="entry name" value="tRNA_Me_trans_C"/>
    <property type="match status" value="1"/>
</dbReference>
<dbReference type="Pfam" id="PF20259">
    <property type="entry name" value="tRNA_Me_trans_M"/>
    <property type="match status" value="1"/>
</dbReference>
<dbReference type="SUPFAM" id="SSF52402">
    <property type="entry name" value="Adenine nucleotide alpha hydrolases-like"/>
    <property type="match status" value="1"/>
</dbReference>
<keyword id="KW-0067">ATP-binding</keyword>
<keyword id="KW-0963">Cytoplasm</keyword>
<keyword id="KW-1015">Disulfide bond</keyword>
<keyword id="KW-0547">Nucleotide-binding</keyword>
<keyword id="KW-1185">Reference proteome</keyword>
<keyword id="KW-0694">RNA-binding</keyword>
<keyword id="KW-0808">Transferase</keyword>
<keyword id="KW-0819">tRNA processing</keyword>
<keyword id="KW-0820">tRNA-binding</keyword>
<organism>
    <name type="scientific">Blochmanniella pennsylvanica (strain BPEN)</name>
    <dbReference type="NCBI Taxonomy" id="291272"/>
    <lineage>
        <taxon>Bacteria</taxon>
        <taxon>Pseudomonadati</taxon>
        <taxon>Pseudomonadota</taxon>
        <taxon>Gammaproteobacteria</taxon>
        <taxon>Enterobacterales</taxon>
        <taxon>Enterobacteriaceae</taxon>
        <taxon>ant endosymbionts</taxon>
        <taxon>Candidatus Blochmanniella</taxon>
    </lineage>
</organism>
<reference key="1">
    <citation type="journal article" date="2005" name="Genome Res.">
        <title>Genome sequence of Blochmannia pennsylvanicus indicates parallel evolutionary trends among bacterial mutualists of insects.</title>
        <authorList>
            <person name="Degnan P.H."/>
            <person name="Lazarus A.B."/>
            <person name="Wernegreen J.J."/>
        </authorList>
    </citation>
    <scope>NUCLEOTIDE SEQUENCE [LARGE SCALE GENOMIC DNA]</scope>
    <source>
        <strain>BPEN</strain>
    </source>
</reference>
<accession>Q492R5</accession>
<proteinExistence type="inferred from homology"/>
<evidence type="ECO:0000255" key="1">
    <source>
        <dbReference type="HAMAP-Rule" id="MF_00144"/>
    </source>
</evidence>